<gene>
    <name evidence="10 12" type="primary">TRBV6-7</name>
</gene>
<evidence type="ECO:0000255" key="1"/>
<evidence type="ECO:0000255" key="2">
    <source>
        <dbReference type="PROSITE-ProRule" id="PRU00114"/>
    </source>
</evidence>
<evidence type="ECO:0000269" key="3">
    <source>
    </source>
</evidence>
<evidence type="ECO:0000303" key="4">
    <source>
    </source>
</evidence>
<evidence type="ECO:0000303" key="5">
    <source>
    </source>
</evidence>
<evidence type="ECO:0000303" key="6">
    <source>
    </source>
</evidence>
<evidence type="ECO:0000303" key="7">
    <source>
    </source>
</evidence>
<evidence type="ECO:0000303" key="8">
    <source>
    </source>
</evidence>
<evidence type="ECO:0000303" key="9">
    <source>
    </source>
</evidence>
<evidence type="ECO:0000303" key="10">
    <source ref="3"/>
</evidence>
<evidence type="ECO:0000305" key="11"/>
<evidence type="ECO:0000312" key="12">
    <source>
        <dbReference type="HGNC" id="HGNC:12232"/>
    </source>
</evidence>
<name>TVB67_HUMAN</name>
<accession>A0A0A0MS04</accession>
<sequence length="114" mass="12588">MSLGLLCCVAFSLLWAGPMNAGVTQTPKFHVLKTGQSMTLLCAQDMNHEYMYRYRQDPGKGLRLIYYSVAAALTDKGEVPNGYNVSRSNTEDFPLKLESAAPSQTSVYFCASSY</sequence>
<proteinExistence type="evidence at protein level"/>
<reference key="1">
    <citation type="journal article" date="2003" name="Nature">
        <title>The DNA sequence of human chromosome 7.</title>
        <authorList>
            <person name="Hillier L.W."/>
            <person name="Fulton R.S."/>
            <person name="Fulton L.A."/>
            <person name="Graves T.A."/>
            <person name="Pepin K.H."/>
            <person name="Wagner-McPherson C."/>
            <person name="Layman D."/>
            <person name="Maas J."/>
            <person name="Jaeger S."/>
            <person name="Walker R."/>
            <person name="Wylie K."/>
            <person name="Sekhon M."/>
            <person name="Becker M.C."/>
            <person name="O'Laughlin M.D."/>
            <person name="Schaller M.E."/>
            <person name="Fewell G.A."/>
            <person name="Delehaunty K.D."/>
            <person name="Miner T.L."/>
            <person name="Nash W.E."/>
            <person name="Cordes M."/>
            <person name="Du H."/>
            <person name="Sun H."/>
            <person name="Edwards J."/>
            <person name="Bradshaw-Cordum H."/>
            <person name="Ali J."/>
            <person name="Andrews S."/>
            <person name="Isak A."/>
            <person name="Vanbrunt A."/>
            <person name="Nguyen C."/>
            <person name="Du F."/>
            <person name="Lamar B."/>
            <person name="Courtney L."/>
            <person name="Kalicki J."/>
            <person name="Ozersky P."/>
            <person name="Bielicki L."/>
            <person name="Scott K."/>
            <person name="Holmes A."/>
            <person name="Harkins R."/>
            <person name="Harris A."/>
            <person name="Strong C.M."/>
            <person name="Hou S."/>
            <person name="Tomlinson C."/>
            <person name="Dauphin-Kohlberg S."/>
            <person name="Kozlowicz-Reilly A."/>
            <person name="Leonard S."/>
            <person name="Rohlfing T."/>
            <person name="Rock S.M."/>
            <person name="Tin-Wollam A.-M."/>
            <person name="Abbott A."/>
            <person name="Minx P."/>
            <person name="Maupin R."/>
            <person name="Strowmatt C."/>
            <person name="Latreille P."/>
            <person name="Miller N."/>
            <person name="Johnson D."/>
            <person name="Murray J."/>
            <person name="Woessner J.P."/>
            <person name="Wendl M.C."/>
            <person name="Yang S.-P."/>
            <person name="Schultz B.R."/>
            <person name="Wallis J.W."/>
            <person name="Spieth J."/>
            <person name="Bieri T.A."/>
            <person name="Nelson J.O."/>
            <person name="Berkowicz N."/>
            <person name="Wohldmann P.E."/>
            <person name="Cook L.L."/>
            <person name="Hickenbotham M.T."/>
            <person name="Eldred J."/>
            <person name="Williams D."/>
            <person name="Bedell J.A."/>
            <person name="Mardis E.R."/>
            <person name="Clifton S.W."/>
            <person name="Chissoe S.L."/>
            <person name="Marra M.A."/>
            <person name="Raymond C."/>
            <person name="Haugen E."/>
            <person name="Gillett W."/>
            <person name="Zhou Y."/>
            <person name="James R."/>
            <person name="Phelps K."/>
            <person name="Iadanoto S."/>
            <person name="Bubb K."/>
            <person name="Simms E."/>
            <person name="Levy R."/>
            <person name="Clendenning J."/>
            <person name="Kaul R."/>
            <person name="Kent W.J."/>
            <person name="Furey T.S."/>
            <person name="Baertsch R.A."/>
            <person name="Brent M.R."/>
            <person name="Keibler E."/>
            <person name="Flicek P."/>
            <person name="Bork P."/>
            <person name="Suyama M."/>
            <person name="Bailey J.A."/>
            <person name="Portnoy M.E."/>
            <person name="Torrents D."/>
            <person name="Chinwalla A.T."/>
            <person name="Gish W.R."/>
            <person name="Eddy S.R."/>
            <person name="McPherson J.D."/>
            <person name="Olson M.V."/>
            <person name="Eichler E.E."/>
            <person name="Green E.D."/>
            <person name="Waterston R.H."/>
            <person name="Wilson R.K."/>
        </authorList>
    </citation>
    <scope>NUCLEOTIDE SEQUENCE [LARGE SCALE GENOMIC DNA] (IMGT ALLELE TRBV6-7*01)</scope>
</reference>
<reference key="2">
    <citation type="journal article" date="1998" name="Exp. Clin. Immunogenet.">
        <title>IMGT (ImMunoGeneTics) locus on focus. A new section of Experimental and Clinical Immunogenetics.</title>
        <authorList>
            <person name="Lefranc M.P."/>
        </authorList>
    </citation>
    <scope>CHARACTERIZATION</scope>
</reference>
<reference key="3">
    <citation type="book" date="2001" name="The T Cell Receptor FactsBook.">
        <title>The T Cell Receptor FactsBook.</title>
        <editorList>
            <person name="Lefranc M.P."/>
            <person name="Lefranc G."/>
        </editorList>
        <authorList>
            <person name="Lefranc M.P."/>
            <person name="Lefranc G."/>
        </authorList>
    </citation>
    <scope>NOMENCLATURE</scope>
</reference>
<reference key="4">
    <citation type="journal article" date="2004" name="Nat. Rev. Immunol.">
        <title>The many important facets of T-cell repertoire diversity.</title>
        <authorList>
            <person name="Nikolich-Zugich J."/>
            <person name="Slifka M.K."/>
            <person name="Messaoudi I."/>
        </authorList>
    </citation>
    <scope>REVIEW ON T CELL REPERTOIRE DIVERSITY</scope>
</reference>
<reference key="5">
    <citation type="journal article" date="2010" name="Cold Spring Harb. Perspect. Biol.">
        <title>Structural biology of the T-cell receptor: insights into receptor assembly, ligand recognition, and initiation of signaling.</title>
        <authorList>
            <person name="Wucherpfennig K.W."/>
            <person name="Gagnon E."/>
            <person name="Call M.J."/>
            <person name="Huseby E.S."/>
            <person name="Call M.E."/>
        </authorList>
    </citation>
    <scope>REVIEW ON T CELL RECEPTOR-CD3 COMPLEX ASSEMBLY</scope>
    <scope>SUBCELLULAR LOCATION</scope>
</reference>
<reference key="6">
    <citation type="journal article" date="2013" name="Nat. Rev. Immunol.">
        <title>T cell receptor signalling networks: branched, diversified and bounded.</title>
        <authorList>
            <person name="Brownlie R.J."/>
            <person name="Zamoyska R."/>
        </authorList>
    </citation>
    <scope>REVIEW ON T CELL RECEPTOR SIGNALING</scope>
</reference>
<reference key="7">
    <citation type="journal article" date="2014" name="Front. Immunol.">
        <title>Immunoglobulin and T Cell Receptor Genes: IMGT((R)) and the Birth and Rise of Immunoinformatics.</title>
        <authorList>
            <person name="Lefranc M.P."/>
        </authorList>
    </citation>
    <scope>NOMENCLATURE</scope>
</reference>
<reference key="8">
    <citation type="journal article" date="2015" name="Annu. Rev. Immunol.">
        <title>T cell antigen receptor recognition of antigen-presenting molecules.</title>
        <authorList>
            <person name="Rossjohn J."/>
            <person name="Gras S."/>
            <person name="Miles J.J."/>
            <person name="Turner S.J."/>
            <person name="Godfrey D.I."/>
            <person name="McCluskey J."/>
        </authorList>
    </citation>
    <scope>REVIEW ON FUNCTION</scope>
</reference>
<keyword id="KW-1064">Adaptive immunity</keyword>
<keyword id="KW-1003">Cell membrane</keyword>
<keyword id="KW-1015">Disulfide bond</keyword>
<keyword id="KW-0325">Glycoprotein</keyword>
<keyword id="KW-0391">Immunity</keyword>
<keyword id="KW-0393">Immunoglobulin domain</keyword>
<keyword id="KW-0472">Membrane</keyword>
<keyword id="KW-0675">Receptor</keyword>
<keyword id="KW-1185">Reference proteome</keyword>
<keyword id="KW-0732">Signal</keyword>
<keyword id="KW-1279">T cell receptor</keyword>
<protein>
    <recommendedName>
        <fullName evidence="11">Probable non-functional T cell receptor beta variable 6-7</fullName>
    </recommendedName>
</protein>
<organism>
    <name type="scientific">Homo sapiens</name>
    <name type="common">Human</name>
    <dbReference type="NCBI Taxonomy" id="9606"/>
    <lineage>
        <taxon>Eukaryota</taxon>
        <taxon>Metazoa</taxon>
        <taxon>Chordata</taxon>
        <taxon>Craniata</taxon>
        <taxon>Vertebrata</taxon>
        <taxon>Euteleostomi</taxon>
        <taxon>Mammalia</taxon>
        <taxon>Eutheria</taxon>
        <taxon>Euarchontoglires</taxon>
        <taxon>Primates</taxon>
        <taxon>Haplorrhini</taxon>
        <taxon>Catarrhini</taxon>
        <taxon>Hominidae</taxon>
        <taxon>Homo</taxon>
    </lineage>
</organism>
<comment type="function">
    <text evidence="3 4 6 7 8">Probable non-functional open reading frame (ORF) of V region of the variable domain of T cell receptor (TR) beta chain (PubMed:24600447). Non-functional ORF generally cannot participate in the synthesis of a productive T cell receptor (TR) chain due to altered V-(D)-J or switch recombination and/or splicing site (at mRNA level) and/or conserved amino acid change (protein level) (PubMed:9619395). Alpha-beta T cell receptors are antigen specific receptors which are essential to the immune response and are present on the cell surface of T lymphocytes. Recognize peptide-major histocompatibility (MH) (pMH) complexes that are displayed by antigen presenting cells (APC), a prerequisite for efficient T cell adaptive immunity against pathogens (PubMed:25493333). Binding of alpha-beta TR to pMH complex initiates TR-CD3 clustering on the cell surface and intracellular activation of LCK that phosphorylates the ITAM motifs of CD3G, CD3D, CD3E and CD247 enabling the recruitment of ZAP70. In turn ZAP70 phosphorylates LAT, which recruits numerous signaling molecules to form the LAT signalosome. The LAT signalosome propagates signal branching to three major signaling pathways, the calcium, the mitogen-activated protein kinase (MAPK) kinase and the nuclear factor NF-kappa-B (NF-kB) pathways, leading to the mobilization of transcription factors that are critical for gene expression and essential for T cell growth and differentiation (PubMed:23524462). The T cell repertoire is generated in the thymus, by V-(D)-J rearrangement. This repertoire is then shaped by intrathymic selection events to generate a peripheral T cell pool of self-MH restricted, non-autoaggressive T cells. Post-thymic interaction of alpha-beta TR with the pMH complexes shapes TR structural and functional avidity (PubMed:15040585).</text>
</comment>
<comment type="subunit">
    <text evidence="5">Alpha-beta TR is a heterodimer composed of an alpha and beta chain; disulfide-linked. The alpha-beta TR is associated with the transmembrane signaling CD3 coreceptor proteins to form the TR-CD3 (TcR or TCR). The assembly of alpha-beta TR heterodimers with CD3 occurs in the endoplasmic reticulum where a single alpha-beta TR heterodimer associates with one CD3D-CD3E heterodimer, one CD3G-CD3E heterodimer and one CD247 homodimer forming a stable octameric structure. CD3D-CD3E and CD3G-CD3E heterodimers preferentially associate with TR alpha and TR beta chains, respectively. The association of the CD247 homodimer is the last step of TcR assembly in the endoplasmic reticulum and is required for transport to the cell surface.</text>
</comment>
<comment type="subcellular location">
    <subcellularLocation>
        <location evidence="5">Cell membrane</location>
    </subcellularLocation>
</comment>
<comment type="polymorphism">
    <text evidence="11">There are several alleles. The sequence shown is that of IMGT allele TRBV6-7*01.</text>
</comment>
<comment type="caution">
    <text evidence="9 11">Most probably a non-functional protein that cannot participate to the synthesis of a productive T cell receptor (TR) chain due to a mutation at position 53, corresponding to a conserved amino acid, potentially leading to uncorrect folding (PubMed:9619395).</text>
</comment>
<feature type="signal peptide" evidence="1">
    <location>
        <begin position="1"/>
        <end position="21"/>
    </location>
</feature>
<feature type="chain" id="PRO_5014506432" description="Probable non-functional T cell receptor beta variable 6-7" evidence="1">
    <location>
        <begin position="22"/>
        <end position="114"/>
    </location>
</feature>
<feature type="domain" description="Ig-like" evidence="2">
    <location>
        <begin position="22"/>
        <end position="114" status="greater than"/>
    </location>
</feature>
<feature type="glycosylation site" description="N-linked (GlcNAc...) asparagine" evidence="1">
    <location>
        <position position="84"/>
    </location>
</feature>
<feature type="disulfide bond" evidence="2">
    <location>
        <begin position="42"/>
        <end position="110"/>
    </location>
</feature>
<feature type="non-terminal residue">
    <location>
        <position position="114"/>
    </location>
</feature>
<dbReference type="EMBL" id="AC233282">
    <property type="status" value="NOT_ANNOTATED_CDS"/>
    <property type="molecule type" value="Genomic_DNA"/>
</dbReference>
<dbReference type="EMBL" id="AC244196">
    <property type="status" value="NOT_ANNOTATED_CDS"/>
    <property type="molecule type" value="Genomic_DNA"/>
</dbReference>
<dbReference type="SMR" id="A0A0A0MS04"/>
<dbReference type="FunCoup" id="A0A0A0MS04">
    <property type="interactions" value="424"/>
</dbReference>
<dbReference type="GlyCosmos" id="A0A0A0MS04">
    <property type="glycosylation" value="1 site, No reported glycans"/>
</dbReference>
<dbReference type="GlyGen" id="A0A0A0MS04">
    <property type="glycosylation" value="1 site"/>
</dbReference>
<dbReference type="BioMuta" id="TRBV6-7"/>
<dbReference type="Ensembl" id="ENST00000390373.2">
    <property type="protein sequence ID" value="ENSP00000374896.2"/>
    <property type="gene ID" value="ENSG00000253188.1"/>
</dbReference>
<dbReference type="Ensembl" id="ENST00000631511.1">
    <property type="protein sequence ID" value="ENSP00000488335.1"/>
    <property type="gene ID" value="ENSG00000282470.1"/>
</dbReference>
<dbReference type="UCSC" id="uc033alo.2">
    <property type="organism name" value="human"/>
</dbReference>
<dbReference type="AGR" id="HGNC:12232"/>
<dbReference type="GeneCards" id="TRBV6-7"/>
<dbReference type="HGNC" id="HGNC:12232">
    <property type="gene designation" value="TRBV6-7"/>
</dbReference>
<dbReference type="HPA" id="ENSG00000253188">
    <property type="expression patterns" value="Group enriched (lymphoid tissue, pancreas, testis)"/>
</dbReference>
<dbReference type="neXtProt" id="NX_A0A0A0MS04"/>
<dbReference type="VEuPathDB" id="HostDB:ENSG00000253188"/>
<dbReference type="GeneTree" id="ENSGT00940000154542"/>
<dbReference type="HOGENOM" id="CLU_077975_9_2_1"/>
<dbReference type="InParanoid" id="A0A0A0MS04"/>
<dbReference type="OMA" id="DHDYMSW"/>
<dbReference type="OrthoDB" id="9803478at2759"/>
<dbReference type="PAN-GO" id="A0A0A0MS04">
    <property type="GO annotations" value="2 GO annotations based on evolutionary models"/>
</dbReference>
<dbReference type="SignaLink" id="A0A0A0MS04"/>
<dbReference type="ChiTaRS" id="TRBV6-7">
    <property type="organism name" value="human"/>
</dbReference>
<dbReference type="PRO" id="PR:A0A0A0MS04"/>
<dbReference type="Proteomes" id="UP000005640">
    <property type="component" value="Chromosome 7"/>
</dbReference>
<dbReference type="RNAct" id="A0A0A0MS04">
    <property type="molecule type" value="protein"/>
</dbReference>
<dbReference type="Bgee" id="ENSG00000253188">
    <property type="expression patterns" value="Expressed in granulocyte and 46 other cell types or tissues"/>
</dbReference>
<dbReference type="GO" id="GO:0005886">
    <property type="term" value="C:plasma membrane"/>
    <property type="evidence" value="ECO:0000318"/>
    <property type="project" value="GO_Central"/>
</dbReference>
<dbReference type="GO" id="GO:0042101">
    <property type="term" value="C:T cell receptor complex"/>
    <property type="evidence" value="ECO:0007669"/>
    <property type="project" value="UniProtKB-KW"/>
</dbReference>
<dbReference type="GO" id="GO:0002250">
    <property type="term" value="P:adaptive immune response"/>
    <property type="evidence" value="ECO:0007669"/>
    <property type="project" value="UniProtKB-KW"/>
</dbReference>
<dbReference type="GO" id="GO:0007166">
    <property type="term" value="P:cell surface receptor signaling pathway"/>
    <property type="evidence" value="ECO:0000318"/>
    <property type="project" value="GO_Central"/>
</dbReference>
<dbReference type="Gene3D" id="2.60.40.10">
    <property type="entry name" value="Immunoglobulins"/>
    <property type="match status" value="1"/>
</dbReference>
<dbReference type="InterPro" id="IPR036179">
    <property type="entry name" value="Ig-like_dom_sf"/>
</dbReference>
<dbReference type="InterPro" id="IPR013783">
    <property type="entry name" value="Ig-like_fold"/>
</dbReference>
<dbReference type="InterPro" id="IPR013106">
    <property type="entry name" value="Ig_V-set"/>
</dbReference>
<dbReference type="InterPro" id="IPR050413">
    <property type="entry name" value="TCR_beta_variable"/>
</dbReference>
<dbReference type="PANTHER" id="PTHR23268:SF86">
    <property type="entry name" value="T CELL RECEPTOR BETA VARIABLE 6-8-RELATED"/>
    <property type="match status" value="1"/>
</dbReference>
<dbReference type="PANTHER" id="PTHR23268">
    <property type="entry name" value="T-CELL RECEPTOR BETA CHAIN"/>
    <property type="match status" value="1"/>
</dbReference>
<dbReference type="Pfam" id="PF07686">
    <property type="entry name" value="V-set"/>
    <property type="match status" value="1"/>
</dbReference>
<dbReference type="SUPFAM" id="SSF48726">
    <property type="entry name" value="Immunoglobulin"/>
    <property type="match status" value="1"/>
</dbReference>